<organism>
    <name type="scientific">Aquifex aeolicus (strain VF5)</name>
    <dbReference type="NCBI Taxonomy" id="224324"/>
    <lineage>
        <taxon>Bacteria</taxon>
        <taxon>Pseudomonadati</taxon>
        <taxon>Aquificota</taxon>
        <taxon>Aquificia</taxon>
        <taxon>Aquificales</taxon>
        <taxon>Aquificaceae</taxon>
        <taxon>Aquifex</taxon>
    </lineage>
</organism>
<name>PFKA_AQUAE</name>
<gene>
    <name evidence="1" type="primary">pfkA</name>
    <name type="ordered locus">aq_1708</name>
</gene>
<protein>
    <recommendedName>
        <fullName evidence="1">ATP-dependent 6-phosphofructokinase</fullName>
        <shortName evidence="1">ATP-PFK</shortName>
        <shortName evidence="1">Phosphofructokinase</shortName>
        <ecNumber evidence="1">2.7.1.11</ecNumber>
    </recommendedName>
    <alternativeName>
        <fullName evidence="1">Phosphohexokinase</fullName>
    </alternativeName>
</protein>
<sequence length="321" mass="35409">MRIGILTAGGDAPGMNAVIRAVVRSAEREGHEVIGIKRGYKGLIEGDFIKLTSRDVGGILDRGGTILLSSRDPRYKKLEYREKAYKNLNEQGIEALIILGGEGTLAGAKLTAEETGIPVIGVPCTIDNDVGGTEYCIGYDTALRNAVDAIDKIRDTASSHERIFIVEVMGRNRGFIAVEAGLATGAELILIPEERFPREQIPEEIEKAKKLGKLHFIIVLAEGYCRAKELEDFLLEKIGDKYGEIRSTVLGHIQRGGIPTHFDRIMGTKFGVVAYESLIAGERSGFVAYEKGKFYIEDFEKAQEYKPIDREAYKLNTRLAI</sequence>
<reference key="1">
    <citation type="journal article" date="1998" name="Nature">
        <title>The complete genome of the hyperthermophilic bacterium Aquifex aeolicus.</title>
        <authorList>
            <person name="Deckert G."/>
            <person name="Warren P.V."/>
            <person name="Gaasterland T."/>
            <person name="Young W.G."/>
            <person name="Lenox A.L."/>
            <person name="Graham D.E."/>
            <person name="Overbeek R."/>
            <person name="Snead M.A."/>
            <person name="Keller M."/>
            <person name="Aujay M."/>
            <person name="Huber R."/>
            <person name="Feldman R.A."/>
            <person name="Short J.M."/>
            <person name="Olsen G.J."/>
            <person name="Swanson R.V."/>
        </authorList>
    </citation>
    <scope>NUCLEOTIDE SEQUENCE [LARGE SCALE GENOMIC DNA]</scope>
    <source>
        <strain>VF5</strain>
    </source>
</reference>
<keyword id="KW-0021">Allosteric enzyme</keyword>
<keyword id="KW-0067">ATP-binding</keyword>
<keyword id="KW-0963">Cytoplasm</keyword>
<keyword id="KW-0324">Glycolysis</keyword>
<keyword id="KW-0418">Kinase</keyword>
<keyword id="KW-0460">Magnesium</keyword>
<keyword id="KW-0479">Metal-binding</keyword>
<keyword id="KW-0547">Nucleotide-binding</keyword>
<keyword id="KW-1185">Reference proteome</keyword>
<keyword id="KW-0808">Transferase</keyword>
<feature type="chain" id="PRO_0000111931" description="ATP-dependent 6-phosphofructokinase">
    <location>
        <begin position="1"/>
        <end position="321"/>
    </location>
</feature>
<feature type="active site" description="Proton acceptor" evidence="1">
    <location>
        <position position="127"/>
    </location>
</feature>
<feature type="binding site" evidence="1">
    <location>
        <position position="10"/>
    </location>
    <ligand>
        <name>ATP</name>
        <dbReference type="ChEBI" id="CHEBI:30616"/>
    </ligand>
</feature>
<feature type="binding site" evidence="1">
    <location>
        <begin position="20"/>
        <end position="24"/>
    </location>
    <ligand>
        <name>ADP</name>
        <dbReference type="ChEBI" id="CHEBI:456216"/>
        <note>allosteric activator; ligand shared between dimeric partners</note>
    </ligand>
</feature>
<feature type="binding site" evidence="1">
    <location>
        <begin position="71"/>
        <end position="72"/>
    </location>
    <ligand>
        <name>ATP</name>
        <dbReference type="ChEBI" id="CHEBI:30616"/>
    </ligand>
</feature>
<feature type="binding site" evidence="1">
    <location>
        <begin position="101"/>
        <end position="104"/>
    </location>
    <ligand>
        <name>ATP</name>
        <dbReference type="ChEBI" id="CHEBI:30616"/>
    </ligand>
</feature>
<feature type="binding site" evidence="1">
    <location>
        <position position="102"/>
    </location>
    <ligand>
        <name>Mg(2+)</name>
        <dbReference type="ChEBI" id="CHEBI:18420"/>
        <note>catalytic</note>
    </ligand>
</feature>
<feature type="binding site" description="in other chain" evidence="1">
    <location>
        <begin position="125"/>
        <end position="127"/>
    </location>
    <ligand>
        <name>substrate</name>
        <note>ligand shared between dimeric partners</note>
    </ligand>
</feature>
<feature type="binding site" description="in other chain" evidence="1">
    <location>
        <position position="154"/>
    </location>
    <ligand>
        <name>ADP</name>
        <dbReference type="ChEBI" id="CHEBI:456216"/>
        <note>allosteric activator; ligand shared between dimeric partners</note>
    </ligand>
</feature>
<feature type="binding site" evidence="1">
    <location>
        <position position="162"/>
    </location>
    <ligand>
        <name>substrate</name>
        <note>ligand shared between dimeric partners</note>
    </ligand>
</feature>
<feature type="binding site" description="in other chain" evidence="1">
    <location>
        <begin position="169"/>
        <end position="171"/>
    </location>
    <ligand>
        <name>substrate</name>
        <note>ligand shared between dimeric partners</note>
    </ligand>
</feature>
<feature type="binding site" description="in other chain" evidence="1">
    <location>
        <begin position="185"/>
        <end position="187"/>
    </location>
    <ligand>
        <name>ADP</name>
        <dbReference type="ChEBI" id="CHEBI:456216"/>
        <note>allosteric activator; ligand shared between dimeric partners</note>
    </ligand>
</feature>
<feature type="binding site" description="in other chain" evidence="1">
    <location>
        <begin position="213"/>
        <end position="215"/>
    </location>
    <ligand>
        <name>ADP</name>
        <dbReference type="ChEBI" id="CHEBI:456216"/>
        <note>allosteric activator; ligand shared between dimeric partners</note>
    </ligand>
</feature>
<feature type="binding site" description="in other chain" evidence="1">
    <location>
        <position position="222"/>
    </location>
    <ligand>
        <name>substrate</name>
        <note>ligand shared between dimeric partners</note>
    </ligand>
</feature>
<feature type="binding site" evidence="1">
    <location>
        <position position="246"/>
    </location>
    <ligand>
        <name>substrate</name>
        <note>ligand shared between dimeric partners</note>
    </ligand>
</feature>
<feature type="binding site" description="in other chain" evidence="1">
    <location>
        <begin position="252"/>
        <end position="255"/>
    </location>
    <ligand>
        <name>substrate</name>
        <note>ligand shared between dimeric partners</note>
    </ligand>
</feature>
<dbReference type="EC" id="2.7.1.11" evidence="1"/>
<dbReference type="EMBL" id="AE000657">
    <property type="protein sequence ID" value="AAC07573.1"/>
    <property type="molecule type" value="Genomic_DNA"/>
</dbReference>
<dbReference type="PIR" id="C70447">
    <property type="entry name" value="C70447"/>
</dbReference>
<dbReference type="RefSeq" id="NP_214171.1">
    <property type="nucleotide sequence ID" value="NC_000918.1"/>
</dbReference>
<dbReference type="RefSeq" id="WP_010881108.1">
    <property type="nucleotide sequence ID" value="NC_000918.1"/>
</dbReference>
<dbReference type="SMR" id="O67605"/>
<dbReference type="FunCoup" id="O67605">
    <property type="interactions" value="410"/>
</dbReference>
<dbReference type="STRING" id="224324.aq_1708"/>
<dbReference type="EnsemblBacteria" id="AAC07573">
    <property type="protein sequence ID" value="AAC07573"/>
    <property type="gene ID" value="aq_1708"/>
</dbReference>
<dbReference type="KEGG" id="aae:aq_1708"/>
<dbReference type="PATRIC" id="fig|224324.8.peg.1312"/>
<dbReference type="eggNOG" id="COG0205">
    <property type="taxonomic scope" value="Bacteria"/>
</dbReference>
<dbReference type="HOGENOM" id="CLU_020655_0_1_0"/>
<dbReference type="InParanoid" id="O67605"/>
<dbReference type="OrthoDB" id="9802503at2"/>
<dbReference type="UniPathway" id="UPA00109">
    <property type="reaction ID" value="UER00182"/>
</dbReference>
<dbReference type="Proteomes" id="UP000000798">
    <property type="component" value="Chromosome"/>
</dbReference>
<dbReference type="GO" id="GO:0005945">
    <property type="term" value="C:6-phosphofructokinase complex"/>
    <property type="evidence" value="ECO:0000318"/>
    <property type="project" value="GO_Central"/>
</dbReference>
<dbReference type="GO" id="GO:0003872">
    <property type="term" value="F:6-phosphofructokinase activity"/>
    <property type="evidence" value="ECO:0000318"/>
    <property type="project" value="GO_Central"/>
</dbReference>
<dbReference type="GO" id="GO:0005524">
    <property type="term" value="F:ATP binding"/>
    <property type="evidence" value="ECO:0007669"/>
    <property type="project" value="UniProtKB-KW"/>
</dbReference>
<dbReference type="GO" id="GO:0070095">
    <property type="term" value="F:fructose-6-phosphate binding"/>
    <property type="evidence" value="ECO:0000318"/>
    <property type="project" value="GO_Central"/>
</dbReference>
<dbReference type="GO" id="GO:0046872">
    <property type="term" value="F:metal ion binding"/>
    <property type="evidence" value="ECO:0007669"/>
    <property type="project" value="UniProtKB-KW"/>
</dbReference>
<dbReference type="GO" id="GO:0061621">
    <property type="term" value="P:canonical glycolysis"/>
    <property type="evidence" value="ECO:0000318"/>
    <property type="project" value="GO_Central"/>
</dbReference>
<dbReference type="GO" id="GO:0030388">
    <property type="term" value="P:fructose 1,6-bisphosphate metabolic process"/>
    <property type="evidence" value="ECO:0000318"/>
    <property type="project" value="GO_Central"/>
</dbReference>
<dbReference type="GO" id="GO:0006002">
    <property type="term" value="P:fructose 6-phosphate metabolic process"/>
    <property type="evidence" value="ECO:0000318"/>
    <property type="project" value="GO_Central"/>
</dbReference>
<dbReference type="FunFam" id="3.40.50.460:FF:000002">
    <property type="entry name" value="ATP-dependent 6-phosphofructokinase"/>
    <property type="match status" value="1"/>
</dbReference>
<dbReference type="Gene3D" id="3.40.50.450">
    <property type="match status" value="1"/>
</dbReference>
<dbReference type="Gene3D" id="3.40.50.460">
    <property type="entry name" value="Phosphofructokinase domain"/>
    <property type="match status" value="1"/>
</dbReference>
<dbReference type="HAMAP" id="MF_00339">
    <property type="entry name" value="Phosphofructokinase_I_B1"/>
    <property type="match status" value="1"/>
</dbReference>
<dbReference type="InterPro" id="IPR022953">
    <property type="entry name" value="ATP_PFK"/>
</dbReference>
<dbReference type="InterPro" id="IPR012003">
    <property type="entry name" value="ATP_PFK_prok-type"/>
</dbReference>
<dbReference type="InterPro" id="IPR012828">
    <property type="entry name" value="PFKA_ATP_prok"/>
</dbReference>
<dbReference type="InterPro" id="IPR015912">
    <property type="entry name" value="Phosphofructokinase_CS"/>
</dbReference>
<dbReference type="InterPro" id="IPR000023">
    <property type="entry name" value="Phosphofructokinase_dom"/>
</dbReference>
<dbReference type="InterPro" id="IPR035966">
    <property type="entry name" value="PKF_sf"/>
</dbReference>
<dbReference type="NCBIfam" id="NF002872">
    <property type="entry name" value="PRK03202.1"/>
    <property type="match status" value="1"/>
</dbReference>
<dbReference type="PANTHER" id="PTHR13697:SF4">
    <property type="entry name" value="ATP-DEPENDENT 6-PHOSPHOFRUCTOKINASE"/>
    <property type="match status" value="1"/>
</dbReference>
<dbReference type="PANTHER" id="PTHR13697">
    <property type="entry name" value="PHOSPHOFRUCTOKINASE"/>
    <property type="match status" value="1"/>
</dbReference>
<dbReference type="Pfam" id="PF00365">
    <property type="entry name" value="PFK"/>
    <property type="match status" value="1"/>
</dbReference>
<dbReference type="PIRSF" id="PIRSF000532">
    <property type="entry name" value="ATP_PFK_prok"/>
    <property type="match status" value="1"/>
</dbReference>
<dbReference type="PRINTS" id="PR00476">
    <property type="entry name" value="PHFRCTKINASE"/>
</dbReference>
<dbReference type="SUPFAM" id="SSF53784">
    <property type="entry name" value="Phosphofructokinase"/>
    <property type="match status" value="1"/>
</dbReference>
<dbReference type="PROSITE" id="PS00433">
    <property type="entry name" value="PHOSPHOFRUCTOKINASE"/>
    <property type="match status" value="1"/>
</dbReference>
<accession>O67605</accession>
<evidence type="ECO:0000255" key="1">
    <source>
        <dbReference type="HAMAP-Rule" id="MF_00339"/>
    </source>
</evidence>
<proteinExistence type="inferred from homology"/>
<comment type="function">
    <text evidence="1">Catalyzes the phosphorylation of D-fructose 6-phosphate to fructose 1,6-bisphosphate by ATP, the first committing step of glycolysis.</text>
</comment>
<comment type="catalytic activity">
    <reaction evidence="1">
        <text>beta-D-fructose 6-phosphate + ATP = beta-D-fructose 1,6-bisphosphate + ADP + H(+)</text>
        <dbReference type="Rhea" id="RHEA:16109"/>
        <dbReference type="ChEBI" id="CHEBI:15378"/>
        <dbReference type="ChEBI" id="CHEBI:30616"/>
        <dbReference type="ChEBI" id="CHEBI:32966"/>
        <dbReference type="ChEBI" id="CHEBI:57634"/>
        <dbReference type="ChEBI" id="CHEBI:456216"/>
        <dbReference type="EC" id="2.7.1.11"/>
    </reaction>
</comment>
<comment type="cofactor">
    <cofactor evidence="1">
        <name>Mg(2+)</name>
        <dbReference type="ChEBI" id="CHEBI:18420"/>
    </cofactor>
</comment>
<comment type="activity regulation">
    <text evidence="1">Allosterically activated by ADP and other diphosphonucleosides, and allosterically inhibited by phosphoenolpyruvate.</text>
</comment>
<comment type="pathway">
    <text evidence="1">Carbohydrate degradation; glycolysis; D-glyceraldehyde 3-phosphate and glycerone phosphate from D-glucose: step 3/4.</text>
</comment>
<comment type="subunit">
    <text evidence="1">Homotetramer.</text>
</comment>
<comment type="subcellular location">
    <subcellularLocation>
        <location evidence="1">Cytoplasm</location>
    </subcellularLocation>
</comment>
<comment type="similarity">
    <text evidence="1">Belongs to the phosphofructokinase type A (PFKA) family. ATP-dependent PFK group I subfamily. Prokaryotic clade 'B1' sub-subfamily.</text>
</comment>